<sequence>MLKKGKKTGSNSSGGTAYSPLAYLKRPYFRRSKACPLEQCANEDIDYKNKALLSKFTSEYGRILPSRITSVSSRKQRLLSTAIKRARYLALLPYC</sequence>
<gene>
    <name evidence="1" type="primary">rpsR</name>
    <name type="ordered locus">Erum6860</name>
    <name type="ordered locus">ERWE_CDS_07210</name>
</gene>
<feature type="chain" id="PRO_0000345465" description="Small ribosomal subunit protein bS18">
    <location>
        <begin position="1"/>
        <end position="95"/>
    </location>
</feature>
<organism>
    <name type="scientific">Ehrlichia ruminantium (strain Welgevonden)</name>
    <dbReference type="NCBI Taxonomy" id="254945"/>
    <lineage>
        <taxon>Bacteria</taxon>
        <taxon>Pseudomonadati</taxon>
        <taxon>Pseudomonadota</taxon>
        <taxon>Alphaproteobacteria</taxon>
        <taxon>Rickettsiales</taxon>
        <taxon>Anaplasmataceae</taxon>
        <taxon>Ehrlichia</taxon>
    </lineage>
</organism>
<dbReference type="EMBL" id="CR767821">
    <property type="protein sequence ID" value="CAH58418.1"/>
    <property type="molecule type" value="Genomic_DNA"/>
</dbReference>
<dbReference type="EMBL" id="CR925678">
    <property type="protein sequence ID" value="CAI27215.1"/>
    <property type="molecule type" value="Genomic_DNA"/>
</dbReference>
<dbReference type="RefSeq" id="WP_011155365.1">
    <property type="nucleotide sequence ID" value="NC_005295.2"/>
</dbReference>
<dbReference type="SMR" id="Q5HAJ5"/>
<dbReference type="GeneID" id="33058443"/>
<dbReference type="KEGG" id="eru:Erum6860"/>
<dbReference type="KEGG" id="erw:ERWE_CDS_07210"/>
<dbReference type="eggNOG" id="COG0238">
    <property type="taxonomic scope" value="Bacteria"/>
</dbReference>
<dbReference type="HOGENOM" id="CLU_148710_2_1_5"/>
<dbReference type="Proteomes" id="UP000001021">
    <property type="component" value="Chromosome"/>
</dbReference>
<dbReference type="GO" id="GO:0022627">
    <property type="term" value="C:cytosolic small ribosomal subunit"/>
    <property type="evidence" value="ECO:0007669"/>
    <property type="project" value="TreeGrafter"/>
</dbReference>
<dbReference type="GO" id="GO:0070181">
    <property type="term" value="F:small ribosomal subunit rRNA binding"/>
    <property type="evidence" value="ECO:0007669"/>
    <property type="project" value="TreeGrafter"/>
</dbReference>
<dbReference type="GO" id="GO:0003735">
    <property type="term" value="F:structural constituent of ribosome"/>
    <property type="evidence" value="ECO:0007669"/>
    <property type="project" value="InterPro"/>
</dbReference>
<dbReference type="GO" id="GO:0006412">
    <property type="term" value="P:translation"/>
    <property type="evidence" value="ECO:0007669"/>
    <property type="project" value="UniProtKB-UniRule"/>
</dbReference>
<dbReference type="Gene3D" id="4.10.640.10">
    <property type="entry name" value="Ribosomal protein S18"/>
    <property type="match status" value="1"/>
</dbReference>
<dbReference type="HAMAP" id="MF_00270">
    <property type="entry name" value="Ribosomal_bS18"/>
    <property type="match status" value="1"/>
</dbReference>
<dbReference type="InterPro" id="IPR001648">
    <property type="entry name" value="Ribosomal_bS18"/>
</dbReference>
<dbReference type="InterPro" id="IPR036870">
    <property type="entry name" value="Ribosomal_bS18_sf"/>
</dbReference>
<dbReference type="NCBIfam" id="TIGR00165">
    <property type="entry name" value="S18"/>
    <property type="match status" value="1"/>
</dbReference>
<dbReference type="PANTHER" id="PTHR13479">
    <property type="entry name" value="30S RIBOSOMAL PROTEIN S18"/>
    <property type="match status" value="1"/>
</dbReference>
<dbReference type="PANTHER" id="PTHR13479:SF40">
    <property type="entry name" value="SMALL RIBOSOMAL SUBUNIT PROTEIN BS18M"/>
    <property type="match status" value="1"/>
</dbReference>
<dbReference type="Pfam" id="PF01084">
    <property type="entry name" value="Ribosomal_S18"/>
    <property type="match status" value="1"/>
</dbReference>
<dbReference type="PRINTS" id="PR00974">
    <property type="entry name" value="RIBOSOMALS18"/>
</dbReference>
<dbReference type="SUPFAM" id="SSF46911">
    <property type="entry name" value="Ribosomal protein S18"/>
    <property type="match status" value="1"/>
</dbReference>
<keyword id="KW-0687">Ribonucleoprotein</keyword>
<keyword id="KW-0689">Ribosomal protein</keyword>
<keyword id="KW-0694">RNA-binding</keyword>
<keyword id="KW-0699">rRNA-binding</keyword>
<protein>
    <recommendedName>
        <fullName evidence="1">Small ribosomal subunit protein bS18</fullName>
    </recommendedName>
    <alternativeName>
        <fullName evidence="2">30S ribosomal protein S18</fullName>
    </alternativeName>
</protein>
<accession>Q5HAJ5</accession>
<accession>Q5FDE7</accession>
<evidence type="ECO:0000255" key="1">
    <source>
        <dbReference type="HAMAP-Rule" id="MF_00270"/>
    </source>
</evidence>
<evidence type="ECO:0000305" key="2"/>
<proteinExistence type="inferred from homology"/>
<name>RS18_EHRRW</name>
<comment type="function">
    <text evidence="1">Binds as a heterodimer with protein bS6 to the central domain of the 16S rRNA, where it helps stabilize the platform of the 30S subunit.</text>
</comment>
<comment type="subunit">
    <text evidence="1">Part of the 30S ribosomal subunit. Forms a tight heterodimer with protein bS6.</text>
</comment>
<comment type="similarity">
    <text evidence="1">Belongs to the bacterial ribosomal protein bS18 family.</text>
</comment>
<reference key="1">
    <citation type="journal article" date="2005" name="Proc. Natl. Acad. Sci. U.S.A.">
        <title>The genome of the heartwater agent Ehrlichia ruminantium contains multiple tandem repeats of actively variable copy number.</title>
        <authorList>
            <person name="Collins N.E."/>
            <person name="Liebenberg J."/>
            <person name="de Villiers E.P."/>
            <person name="Brayton K.A."/>
            <person name="Louw E."/>
            <person name="Pretorius A."/>
            <person name="Faber F.E."/>
            <person name="van Heerden H."/>
            <person name="Josemans A."/>
            <person name="van Kleef M."/>
            <person name="Steyn H.C."/>
            <person name="van Strijp M.F."/>
            <person name="Zweygarth E."/>
            <person name="Jongejan F."/>
            <person name="Maillard J.C."/>
            <person name="Berthier D."/>
            <person name="Botha M."/>
            <person name="Joubert F."/>
            <person name="Corton C.H."/>
            <person name="Thomson N.R."/>
            <person name="Allsopp M.T."/>
            <person name="Allsopp B.A."/>
        </authorList>
    </citation>
    <scope>NUCLEOTIDE SEQUENCE [LARGE SCALE GENOMIC DNA]</scope>
    <source>
        <strain>Welgevonden</strain>
    </source>
</reference>
<reference key="2">
    <citation type="journal article" date="2006" name="J. Bacteriol.">
        <title>Comparative genomic analysis of three strains of Ehrlichia ruminantium reveals an active process of genome size plasticity.</title>
        <authorList>
            <person name="Frutos R."/>
            <person name="Viari A."/>
            <person name="Ferraz C."/>
            <person name="Morgat A."/>
            <person name="Eychenie S."/>
            <person name="Kandassamy Y."/>
            <person name="Chantal I."/>
            <person name="Bensaid A."/>
            <person name="Coissac E."/>
            <person name="Vachiery N."/>
            <person name="Demaille J."/>
            <person name="Martinez D."/>
        </authorList>
    </citation>
    <scope>NUCLEOTIDE SEQUENCE [LARGE SCALE GENOMIC DNA]</scope>
    <source>
        <strain>Welgevonden</strain>
    </source>
</reference>